<dbReference type="EMBL" id="CP000024">
    <property type="protein sequence ID" value="AAV63333.1"/>
    <property type="status" value="ALT_INIT"/>
    <property type="molecule type" value="Genomic_DNA"/>
</dbReference>
<dbReference type="RefSeq" id="WP_002946412.1">
    <property type="nucleotide sequence ID" value="NC_006449.1"/>
</dbReference>
<dbReference type="SMR" id="Q5LXZ6"/>
<dbReference type="GeneID" id="66899553"/>
<dbReference type="KEGG" id="stc:str1817"/>
<dbReference type="HOGENOM" id="CLU_062853_0_0_9"/>
<dbReference type="GO" id="GO:0015934">
    <property type="term" value="C:large ribosomal subunit"/>
    <property type="evidence" value="ECO:0007669"/>
    <property type="project" value="InterPro"/>
</dbReference>
<dbReference type="GO" id="GO:0019843">
    <property type="term" value="F:rRNA binding"/>
    <property type="evidence" value="ECO:0007669"/>
    <property type="project" value="UniProtKB-UniRule"/>
</dbReference>
<dbReference type="GO" id="GO:0003735">
    <property type="term" value="F:structural constituent of ribosome"/>
    <property type="evidence" value="ECO:0007669"/>
    <property type="project" value="InterPro"/>
</dbReference>
<dbReference type="GO" id="GO:0000049">
    <property type="term" value="F:tRNA binding"/>
    <property type="evidence" value="ECO:0007669"/>
    <property type="project" value="UniProtKB-KW"/>
</dbReference>
<dbReference type="GO" id="GO:0006417">
    <property type="term" value="P:regulation of translation"/>
    <property type="evidence" value="ECO:0007669"/>
    <property type="project" value="UniProtKB-KW"/>
</dbReference>
<dbReference type="GO" id="GO:0006412">
    <property type="term" value="P:translation"/>
    <property type="evidence" value="ECO:0007669"/>
    <property type="project" value="UniProtKB-UniRule"/>
</dbReference>
<dbReference type="CDD" id="cd00403">
    <property type="entry name" value="Ribosomal_L1"/>
    <property type="match status" value="1"/>
</dbReference>
<dbReference type="FunFam" id="3.40.50.790:FF:000001">
    <property type="entry name" value="50S ribosomal protein L1"/>
    <property type="match status" value="1"/>
</dbReference>
<dbReference type="Gene3D" id="3.30.190.20">
    <property type="match status" value="1"/>
</dbReference>
<dbReference type="Gene3D" id="3.40.50.790">
    <property type="match status" value="1"/>
</dbReference>
<dbReference type="HAMAP" id="MF_01318_B">
    <property type="entry name" value="Ribosomal_uL1_B"/>
    <property type="match status" value="1"/>
</dbReference>
<dbReference type="InterPro" id="IPR005878">
    <property type="entry name" value="Ribosom_uL1_bac-type"/>
</dbReference>
<dbReference type="InterPro" id="IPR002143">
    <property type="entry name" value="Ribosomal_uL1"/>
</dbReference>
<dbReference type="InterPro" id="IPR023674">
    <property type="entry name" value="Ribosomal_uL1-like"/>
</dbReference>
<dbReference type="InterPro" id="IPR028364">
    <property type="entry name" value="Ribosomal_uL1/biogenesis"/>
</dbReference>
<dbReference type="InterPro" id="IPR016095">
    <property type="entry name" value="Ribosomal_uL1_3-a/b-sand"/>
</dbReference>
<dbReference type="InterPro" id="IPR023673">
    <property type="entry name" value="Ribosomal_uL1_CS"/>
</dbReference>
<dbReference type="NCBIfam" id="TIGR01169">
    <property type="entry name" value="rplA_bact"/>
    <property type="match status" value="1"/>
</dbReference>
<dbReference type="PANTHER" id="PTHR36427">
    <property type="entry name" value="54S RIBOSOMAL PROTEIN L1, MITOCHONDRIAL"/>
    <property type="match status" value="1"/>
</dbReference>
<dbReference type="PANTHER" id="PTHR36427:SF3">
    <property type="entry name" value="LARGE RIBOSOMAL SUBUNIT PROTEIN UL1M"/>
    <property type="match status" value="1"/>
</dbReference>
<dbReference type="Pfam" id="PF00687">
    <property type="entry name" value="Ribosomal_L1"/>
    <property type="match status" value="1"/>
</dbReference>
<dbReference type="PIRSF" id="PIRSF002155">
    <property type="entry name" value="Ribosomal_L1"/>
    <property type="match status" value="1"/>
</dbReference>
<dbReference type="SUPFAM" id="SSF56808">
    <property type="entry name" value="Ribosomal protein L1"/>
    <property type="match status" value="1"/>
</dbReference>
<dbReference type="PROSITE" id="PS01199">
    <property type="entry name" value="RIBOSOMAL_L1"/>
    <property type="match status" value="1"/>
</dbReference>
<accession>Q5LXZ6</accession>
<organism>
    <name type="scientific">Streptococcus thermophilus (strain CNRZ 1066)</name>
    <dbReference type="NCBI Taxonomy" id="299768"/>
    <lineage>
        <taxon>Bacteria</taxon>
        <taxon>Bacillati</taxon>
        <taxon>Bacillota</taxon>
        <taxon>Bacilli</taxon>
        <taxon>Lactobacillales</taxon>
        <taxon>Streptococcaceae</taxon>
        <taxon>Streptococcus</taxon>
    </lineage>
</organism>
<keyword id="KW-0678">Repressor</keyword>
<keyword id="KW-0687">Ribonucleoprotein</keyword>
<keyword id="KW-0689">Ribosomal protein</keyword>
<keyword id="KW-0694">RNA-binding</keyword>
<keyword id="KW-0699">rRNA-binding</keyword>
<keyword id="KW-0810">Translation regulation</keyword>
<keyword id="KW-0820">tRNA-binding</keyword>
<name>RL1_STRT1</name>
<comment type="function">
    <text evidence="1">Binds directly to 23S rRNA. The L1 stalk is quite mobile in the ribosome, and is involved in E site tRNA release.</text>
</comment>
<comment type="function">
    <text evidence="1">Protein L1 is also a translational repressor protein, it controls the translation of the L11 operon by binding to its mRNA.</text>
</comment>
<comment type="subunit">
    <text evidence="1">Part of the 50S ribosomal subunit.</text>
</comment>
<comment type="similarity">
    <text evidence="1">Belongs to the universal ribosomal protein uL1 family.</text>
</comment>
<comment type="sequence caution" evidence="2">
    <conflict type="erroneous initiation">
        <sequence resource="EMBL-CDS" id="AAV63333"/>
    </conflict>
</comment>
<sequence>MAKKSKQMRAALEKIDSTKAYSVEEAVALAQETNFAKFDATVEVSYNLNIDVKKADQQIRGAMVLPNGTGKTQRVLVFARGAKAEEAKAAGADFVGEDELVDKINGGWLDFDVVVATPDMMAIVGRLGRVLGPRNLMPNPKTGTVTMDVAKAVEESKGGKITYRADKAGNVQAIIGKVSFEAEKLVENFKAFNDAIQKAKPATAKGVYITNLSITTTQGPGIKVDPNSL</sequence>
<reference key="1">
    <citation type="journal article" date="2004" name="Nat. Biotechnol.">
        <title>Complete sequence and comparative genome analysis of the dairy bacterium Streptococcus thermophilus.</title>
        <authorList>
            <person name="Bolotin A."/>
            <person name="Quinquis B."/>
            <person name="Renault P."/>
            <person name="Sorokin A."/>
            <person name="Ehrlich S.D."/>
            <person name="Kulakauskas S."/>
            <person name="Lapidus A."/>
            <person name="Goltsman E."/>
            <person name="Mazur M."/>
            <person name="Pusch G.D."/>
            <person name="Fonstein M."/>
            <person name="Overbeek R."/>
            <person name="Kyprides N."/>
            <person name="Purnelle B."/>
            <person name="Prozzi D."/>
            <person name="Ngui K."/>
            <person name="Masuy D."/>
            <person name="Hancy F."/>
            <person name="Burteau S."/>
            <person name="Boutry M."/>
            <person name="Delcour J."/>
            <person name="Goffeau A."/>
            <person name="Hols P."/>
        </authorList>
    </citation>
    <scope>NUCLEOTIDE SEQUENCE [LARGE SCALE GENOMIC DNA]</scope>
    <source>
        <strain>CNRZ 1066</strain>
    </source>
</reference>
<evidence type="ECO:0000255" key="1">
    <source>
        <dbReference type="HAMAP-Rule" id="MF_01318"/>
    </source>
</evidence>
<evidence type="ECO:0000305" key="2"/>
<proteinExistence type="inferred from homology"/>
<feature type="chain" id="PRO_0000230645" description="Large ribosomal subunit protein uL1">
    <location>
        <begin position="1"/>
        <end position="229"/>
    </location>
</feature>
<protein>
    <recommendedName>
        <fullName evidence="1">Large ribosomal subunit protein uL1</fullName>
    </recommendedName>
    <alternativeName>
        <fullName evidence="2">50S ribosomal protein L1</fullName>
    </alternativeName>
</protein>
<gene>
    <name evidence="1" type="primary">rplA</name>
    <name type="ordered locus">str1817</name>
</gene>